<keyword id="KW-0170">Cobalt</keyword>
<keyword id="KW-0963">Cytoplasm</keyword>
<keyword id="KW-0460">Magnesium</keyword>
<keyword id="KW-0479">Metal-binding</keyword>
<keyword id="KW-0520">NAD</keyword>
<keyword id="KW-0521">NADP</keyword>
<keyword id="KW-0560">Oxidoreductase</keyword>
<keyword id="KW-0664">Pyridoxine biosynthesis</keyword>
<keyword id="KW-1185">Reference proteome</keyword>
<keyword id="KW-0862">Zinc</keyword>
<reference key="1">
    <citation type="journal article" date="2002" name="Proc. Natl. Acad. Sci. U.S.A.">
        <title>Extensive mosaic structure revealed by the complete genome sequence of uropathogenic Escherichia coli.</title>
        <authorList>
            <person name="Welch R.A."/>
            <person name="Burland V."/>
            <person name="Plunkett G. III"/>
            <person name="Redford P."/>
            <person name="Roesch P."/>
            <person name="Rasko D."/>
            <person name="Buckles E.L."/>
            <person name="Liou S.-R."/>
            <person name="Boutin A."/>
            <person name="Hackett J."/>
            <person name="Stroud D."/>
            <person name="Mayhew G.F."/>
            <person name="Rose D.J."/>
            <person name="Zhou S."/>
            <person name="Schwartz D.C."/>
            <person name="Perna N.T."/>
            <person name="Mobley H.L.T."/>
            <person name="Donnenberg M.S."/>
            <person name="Blattner F.R."/>
        </authorList>
    </citation>
    <scope>NUCLEOTIDE SEQUENCE [LARGE SCALE GENOMIC DNA]</scope>
    <source>
        <strain>CFT073 / ATCC 700928 / UPEC</strain>
    </source>
</reference>
<dbReference type="EC" id="1.1.1.262" evidence="1"/>
<dbReference type="EMBL" id="AE014075">
    <property type="protein sequence ID" value="AAN78561.1"/>
    <property type="molecule type" value="Genomic_DNA"/>
</dbReference>
<dbReference type="RefSeq" id="WP_000241229.1">
    <property type="nucleotide sequence ID" value="NZ_CP051263.1"/>
</dbReference>
<dbReference type="SMR" id="Q8FL95"/>
<dbReference type="STRING" id="199310.c0065"/>
<dbReference type="KEGG" id="ecc:c0065"/>
<dbReference type="eggNOG" id="COG1995">
    <property type="taxonomic scope" value="Bacteria"/>
</dbReference>
<dbReference type="HOGENOM" id="CLU_040168_1_0_6"/>
<dbReference type="BioCyc" id="ECOL199310:C0065-MONOMER"/>
<dbReference type="UniPathway" id="UPA00244">
    <property type="reaction ID" value="UER00312"/>
</dbReference>
<dbReference type="Proteomes" id="UP000001410">
    <property type="component" value="Chromosome"/>
</dbReference>
<dbReference type="GO" id="GO:0005737">
    <property type="term" value="C:cytoplasm"/>
    <property type="evidence" value="ECO:0007669"/>
    <property type="project" value="UniProtKB-SubCell"/>
</dbReference>
<dbReference type="GO" id="GO:0050570">
    <property type="term" value="F:4-hydroxythreonine-4-phosphate dehydrogenase activity"/>
    <property type="evidence" value="ECO:0007669"/>
    <property type="project" value="UniProtKB-UniRule"/>
</dbReference>
<dbReference type="GO" id="GO:0050897">
    <property type="term" value="F:cobalt ion binding"/>
    <property type="evidence" value="ECO:0007669"/>
    <property type="project" value="UniProtKB-UniRule"/>
</dbReference>
<dbReference type="GO" id="GO:0000287">
    <property type="term" value="F:magnesium ion binding"/>
    <property type="evidence" value="ECO:0007669"/>
    <property type="project" value="UniProtKB-UniRule"/>
</dbReference>
<dbReference type="GO" id="GO:0051287">
    <property type="term" value="F:NAD binding"/>
    <property type="evidence" value="ECO:0007669"/>
    <property type="project" value="InterPro"/>
</dbReference>
<dbReference type="GO" id="GO:0008270">
    <property type="term" value="F:zinc ion binding"/>
    <property type="evidence" value="ECO:0007669"/>
    <property type="project" value="UniProtKB-UniRule"/>
</dbReference>
<dbReference type="GO" id="GO:0042823">
    <property type="term" value="P:pyridoxal phosphate biosynthetic process"/>
    <property type="evidence" value="ECO:0007669"/>
    <property type="project" value="UniProtKB-UniRule"/>
</dbReference>
<dbReference type="GO" id="GO:0008615">
    <property type="term" value="P:pyridoxine biosynthetic process"/>
    <property type="evidence" value="ECO:0007669"/>
    <property type="project" value="UniProtKB-UniRule"/>
</dbReference>
<dbReference type="FunFam" id="3.40.718.10:FF:000010">
    <property type="entry name" value="4-hydroxythreonine-4-phosphate dehydrogenase"/>
    <property type="match status" value="1"/>
</dbReference>
<dbReference type="Gene3D" id="3.40.718.10">
    <property type="entry name" value="Isopropylmalate Dehydrogenase"/>
    <property type="match status" value="1"/>
</dbReference>
<dbReference type="HAMAP" id="MF_00536">
    <property type="entry name" value="PdxA"/>
    <property type="match status" value="1"/>
</dbReference>
<dbReference type="InterPro" id="IPR037510">
    <property type="entry name" value="PdxA"/>
</dbReference>
<dbReference type="InterPro" id="IPR005255">
    <property type="entry name" value="PdxA_fam"/>
</dbReference>
<dbReference type="NCBIfam" id="TIGR00557">
    <property type="entry name" value="pdxA"/>
    <property type="match status" value="1"/>
</dbReference>
<dbReference type="PANTHER" id="PTHR30004">
    <property type="entry name" value="4-HYDROXYTHREONINE-4-PHOSPHATE DEHYDROGENASE"/>
    <property type="match status" value="1"/>
</dbReference>
<dbReference type="PANTHER" id="PTHR30004:SF5">
    <property type="entry name" value="4-HYDROXYTHREONINE-4-PHOSPHATE DEHYDROGENASE"/>
    <property type="match status" value="1"/>
</dbReference>
<dbReference type="Pfam" id="PF04166">
    <property type="entry name" value="PdxA"/>
    <property type="match status" value="1"/>
</dbReference>
<dbReference type="SUPFAM" id="SSF53659">
    <property type="entry name" value="Isocitrate/Isopropylmalate dehydrogenase-like"/>
    <property type="match status" value="1"/>
</dbReference>
<comment type="function">
    <text evidence="1">Catalyzes the NAD(P)-dependent oxidation of 4-(phosphooxy)-L-threonine (HTP) into 2-amino-3-oxo-4-(phosphooxy)butyric acid which spontaneously decarboxylates to form 3-amino-2-oxopropyl phosphate (AHAP).</text>
</comment>
<comment type="catalytic activity">
    <reaction evidence="1">
        <text>4-(phosphooxy)-L-threonine + NAD(+) = 3-amino-2-oxopropyl phosphate + CO2 + NADH</text>
        <dbReference type="Rhea" id="RHEA:32275"/>
        <dbReference type="ChEBI" id="CHEBI:16526"/>
        <dbReference type="ChEBI" id="CHEBI:57279"/>
        <dbReference type="ChEBI" id="CHEBI:57540"/>
        <dbReference type="ChEBI" id="CHEBI:57945"/>
        <dbReference type="ChEBI" id="CHEBI:58452"/>
        <dbReference type="EC" id="1.1.1.262"/>
    </reaction>
</comment>
<comment type="cofactor">
    <cofactor evidence="1">
        <name>Zn(2+)</name>
        <dbReference type="ChEBI" id="CHEBI:29105"/>
    </cofactor>
    <cofactor evidence="1">
        <name>Mg(2+)</name>
        <dbReference type="ChEBI" id="CHEBI:18420"/>
    </cofactor>
    <cofactor evidence="1">
        <name>Co(2+)</name>
        <dbReference type="ChEBI" id="CHEBI:48828"/>
    </cofactor>
    <text evidence="1">Binds 1 divalent metal cation per subunit. Can use ions such as Zn(2+), Mg(2+) or Co(2+).</text>
</comment>
<comment type="pathway">
    <text evidence="1">Cofactor biosynthesis; pyridoxine 5'-phosphate biosynthesis; pyridoxine 5'-phosphate from D-erythrose 4-phosphate: step 4/5.</text>
</comment>
<comment type="subunit">
    <text evidence="1">Homodimer.</text>
</comment>
<comment type="subcellular location">
    <subcellularLocation>
        <location evidence="1">Cytoplasm</location>
    </subcellularLocation>
</comment>
<comment type="miscellaneous">
    <text evidence="1">The active site is located at the dimer interface.</text>
</comment>
<comment type="similarity">
    <text evidence="1">Belongs to the PdxA family.</text>
</comment>
<evidence type="ECO:0000255" key="1">
    <source>
        <dbReference type="HAMAP-Rule" id="MF_00536"/>
    </source>
</evidence>
<name>PDXA_ECOL6</name>
<feature type="chain" id="PRO_0000188805" description="4-hydroxythreonine-4-phosphate dehydrogenase">
    <location>
        <begin position="1"/>
        <end position="329"/>
    </location>
</feature>
<feature type="binding site" evidence="1">
    <location>
        <position position="136"/>
    </location>
    <ligand>
        <name>substrate</name>
    </ligand>
</feature>
<feature type="binding site" evidence="1">
    <location>
        <position position="137"/>
    </location>
    <ligand>
        <name>substrate</name>
    </ligand>
</feature>
<feature type="binding site" evidence="1">
    <location>
        <position position="166"/>
    </location>
    <ligand>
        <name>a divalent metal cation</name>
        <dbReference type="ChEBI" id="CHEBI:60240"/>
        <note>ligand shared between dimeric partners</note>
    </ligand>
</feature>
<feature type="binding site" evidence="1">
    <location>
        <position position="211"/>
    </location>
    <ligand>
        <name>a divalent metal cation</name>
        <dbReference type="ChEBI" id="CHEBI:60240"/>
        <note>ligand shared between dimeric partners</note>
    </ligand>
</feature>
<feature type="binding site" evidence="1">
    <location>
        <position position="266"/>
    </location>
    <ligand>
        <name>a divalent metal cation</name>
        <dbReference type="ChEBI" id="CHEBI:60240"/>
        <note>ligand shared between dimeric partners</note>
    </ligand>
</feature>
<feature type="binding site" evidence="1">
    <location>
        <position position="274"/>
    </location>
    <ligand>
        <name>substrate</name>
    </ligand>
</feature>
<feature type="binding site" evidence="1">
    <location>
        <position position="283"/>
    </location>
    <ligand>
        <name>substrate</name>
    </ligand>
</feature>
<feature type="binding site" evidence="1">
    <location>
        <position position="292"/>
    </location>
    <ligand>
        <name>substrate</name>
    </ligand>
</feature>
<gene>
    <name evidence="1" type="primary">pdxA</name>
    <name type="ordered locus">c0065</name>
</gene>
<accession>Q8FL95</accession>
<sequence length="329" mass="35263">MVKTQRVVITPGEPAGIGPDLIVQLAQREWPVELVVCADATLLTDRAAMLGLPLTLRPYSPNSPAQPQTAGTLTLLPVALRESVTVGQLAVENGHYVVETLARACDGCLNGEFAALITGPVHKGVINDAGIPFTGHTEFFEERSQAKKVVMMLATEELRVALATTHLPLRDIADAITPALLHEVIAILHHDLRTKFGIAEPRILVCGLNPHAGEGGHMGTEEIDTIIPVLNELREQGMKLNGPLPADTLFQPKYLDNADAVLAMYHDQGLPVLKYQGFGRGVNITLGLPFIRTSVDHGTALELAGRGKADVGSFITALNLAIKMIVNTQ</sequence>
<protein>
    <recommendedName>
        <fullName evidence="1">4-hydroxythreonine-4-phosphate dehydrogenase</fullName>
        <ecNumber evidence="1">1.1.1.262</ecNumber>
    </recommendedName>
    <alternativeName>
        <fullName evidence="1">4-(phosphohydroxy)-L-threonine dehydrogenase</fullName>
    </alternativeName>
</protein>
<proteinExistence type="inferred from homology"/>
<organism>
    <name type="scientific">Escherichia coli O6:H1 (strain CFT073 / ATCC 700928 / UPEC)</name>
    <dbReference type="NCBI Taxonomy" id="199310"/>
    <lineage>
        <taxon>Bacteria</taxon>
        <taxon>Pseudomonadati</taxon>
        <taxon>Pseudomonadota</taxon>
        <taxon>Gammaproteobacteria</taxon>
        <taxon>Enterobacterales</taxon>
        <taxon>Enterobacteriaceae</taxon>
        <taxon>Escherichia</taxon>
    </lineage>
</organism>